<sequence>MSKHKVSPATIAKNKKALHDYTILEKFEAGIVLQGWEVKSIRAGKVQMVDSHVHIKHGEAWLFNCLITPLLSASTHVVADAAATRKLLLNRREINKIMGRIEQKGFTCIPLSMYWKGPRVKVEIALAQGKKVHDKRQAQKDKDWAREKDRLFKKAYK</sequence>
<accession>Q5NFP4</accession>
<feature type="chain" id="PRO_0000102950" description="SsrA-binding protein">
    <location>
        <begin position="1"/>
        <end position="157"/>
    </location>
</feature>
<feature type="region of interest" description="Disordered" evidence="2">
    <location>
        <begin position="132"/>
        <end position="157"/>
    </location>
</feature>
<feature type="compositionally biased region" description="Basic and acidic residues" evidence="2">
    <location>
        <begin position="135"/>
        <end position="157"/>
    </location>
</feature>
<name>SSRP_FRATT</name>
<protein>
    <recommendedName>
        <fullName evidence="1">SsrA-binding protein</fullName>
    </recommendedName>
    <alternativeName>
        <fullName evidence="1">Small protein B</fullName>
    </alternativeName>
</protein>
<proteinExistence type="inferred from homology"/>
<organism>
    <name type="scientific">Francisella tularensis subsp. tularensis (strain SCHU S4 / Schu 4)</name>
    <dbReference type="NCBI Taxonomy" id="177416"/>
    <lineage>
        <taxon>Bacteria</taxon>
        <taxon>Pseudomonadati</taxon>
        <taxon>Pseudomonadota</taxon>
        <taxon>Gammaproteobacteria</taxon>
        <taxon>Thiotrichales</taxon>
        <taxon>Francisellaceae</taxon>
        <taxon>Francisella</taxon>
    </lineage>
</organism>
<comment type="function">
    <text evidence="1">Required for rescue of stalled ribosomes mediated by trans-translation. Binds to transfer-messenger RNA (tmRNA), required for stable association of tmRNA with ribosomes. tmRNA and SmpB together mimic tRNA shape, replacing the anticodon stem-loop with SmpB. tmRNA is encoded by the ssrA gene; the 2 termini fold to resemble tRNA(Ala) and it encodes a 'tag peptide', a short internal open reading frame. During trans-translation Ala-aminoacylated tmRNA acts like a tRNA, entering the A-site of stalled ribosomes, displacing the stalled mRNA. The ribosome then switches to translate the ORF on the tmRNA; the nascent peptide is terminated with the 'tag peptide' encoded by the tmRNA and targeted for degradation. The ribosome is freed to recommence translation, which seems to be the essential function of trans-translation.</text>
</comment>
<comment type="subcellular location">
    <subcellularLocation>
        <location evidence="1">Cytoplasm</location>
    </subcellularLocation>
    <text evidence="1">The tmRNA-SmpB complex associates with stalled 70S ribosomes.</text>
</comment>
<comment type="similarity">
    <text evidence="1">Belongs to the SmpB family.</text>
</comment>
<keyword id="KW-0963">Cytoplasm</keyword>
<keyword id="KW-1185">Reference proteome</keyword>
<keyword id="KW-0694">RNA-binding</keyword>
<reference key="1">
    <citation type="journal article" date="2005" name="Nat. Genet.">
        <title>The complete genome sequence of Francisella tularensis, the causative agent of tularemia.</title>
        <authorList>
            <person name="Larsson P."/>
            <person name="Oyston P.C.F."/>
            <person name="Chain P."/>
            <person name="Chu M.C."/>
            <person name="Duffield M."/>
            <person name="Fuxelius H.-H."/>
            <person name="Garcia E."/>
            <person name="Haelltorp G."/>
            <person name="Johansson D."/>
            <person name="Isherwood K.E."/>
            <person name="Karp P.D."/>
            <person name="Larsson E."/>
            <person name="Liu Y."/>
            <person name="Michell S."/>
            <person name="Prior J."/>
            <person name="Prior R."/>
            <person name="Malfatti S."/>
            <person name="Sjoestedt A."/>
            <person name="Svensson K."/>
            <person name="Thompson N."/>
            <person name="Vergez L."/>
            <person name="Wagg J.K."/>
            <person name="Wren B.W."/>
            <person name="Lindler L.E."/>
            <person name="Andersson S.G.E."/>
            <person name="Forsman M."/>
            <person name="Titball R.W."/>
        </authorList>
    </citation>
    <scope>NUCLEOTIDE SEQUENCE [LARGE SCALE GENOMIC DNA]</scope>
    <source>
        <strain>SCHU S4 / Schu 4</strain>
    </source>
</reference>
<dbReference type="EMBL" id="AJ749949">
    <property type="protein sequence ID" value="CAG45819.1"/>
    <property type="molecule type" value="Genomic_DNA"/>
</dbReference>
<dbReference type="RefSeq" id="WP_003015283.1">
    <property type="nucleotide sequence ID" value="NZ_CP010290.1"/>
</dbReference>
<dbReference type="RefSeq" id="YP_170148.1">
    <property type="nucleotide sequence ID" value="NC_006570.2"/>
</dbReference>
<dbReference type="SMR" id="Q5NFP4"/>
<dbReference type="STRING" id="177416.FTT_1186"/>
<dbReference type="DNASU" id="3190711"/>
<dbReference type="EnsemblBacteria" id="CAG45819">
    <property type="protein sequence ID" value="CAG45819"/>
    <property type="gene ID" value="FTT_1186"/>
</dbReference>
<dbReference type="KEGG" id="ftu:FTT_1186"/>
<dbReference type="eggNOG" id="COG0691">
    <property type="taxonomic scope" value="Bacteria"/>
</dbReference>
<dbReference type="OrthoDB" id="9805462at2"/>
<dbReference type="Proteomes" id="UP000001174">
    <property type="component" value="Chromosome"/>
</dbReference>
<dbReference type="GO" id="GO:0005829">
    <property type="term" value="C:cytosol"/>
    <property type="evidence" value="ECO:0007669"/>
    <property type="project" value="TreeGrafter"/>
</dbReference>
<dbReference type="GO" id="GO:0003723">
    <property type="term" value="F:RNA binding"/>
    <property type="evidence" value="ECO:0007669"/>
    <property type="project" value="UniProtKB-UniRule"/>
</dbReference>
<dbReference type="GO" id="GO:0070929">
    <property type="term" value="P:trans-translation"/>
    <property type="evidence" value="ECO:0007669"/>
    <property type="project" value="UniProtKB-UniRule"/>
</dbReference>
<dbReference type="CDD" id="cd09294">
    <property type="entry name" value="SmpB"/>
    <property type="match status" value="1"/>
</dbReference>
<dbReference type="Gene3D" id="2.40.280.10">
    <property type="match status" value="1"/>
</dbReference>
<dbReference type="HAMAP" id="MF_00023">
    <property type="entry name" value="SmpB"/>
    <property type="match status" value="1"/>
</dbReference>
<dbReference type="InterPro" id="IPR023620">
    <property type="entry name" value="SmpB"/>
</dbReference>
<dbReference type="InterPro" id="IPR000037">
    <property type="entry name" value="SsrA-bd_prot"/>
</dbReference>
<dbReference type="InterPro" id="IPR020081">
    <property type="entry name" value="SsrA-bd_prot_CS"/>
</dbReference>
<dbReference type="NCBIfam" id="NF003843">
    <property type="entry name" value="PRK05422.1"/>
    <property type="match status" value="1"/>
</dbReference>
<dbReference type="NCBIfam" id="TIGR00086">
    <property type="entry name" value="smpB"/>
    <property type="match status" value="1"/>
</dbReference>
<dbReference type="PANTHER" id="PTHR30308:SF2">
    <property type="entry name" value="SSRA-BINDING PROTEIN"/>
    <property type="match status" value="1"/>
</dbReference>
<dbReference type="PANTHER" id="PTHR30308">
    <property type="entry name" value="TMRNA-BINDING COMPONENT OF TRANS-TRANSLATION TAGGING COMPLEX"/>
    <property type="match status" value="1"/>
</dbReference>
<dbReference type="Pfam" id="PF01668">
    <property type="entry name" value="SmpB"/>
    <property type="match status" value="1"/>
</dbReference>
<dbReference type="SUPFAM" id="SSF74982">
    <property type="entry name" value="Small protein B (SmpB)"/>
    <property type="match status" value="1"/>
</dbReference>
<dbReference type="PROSITE" id="PS01317">
    <property type="entry name" value="SSRP"/>
    <property type="match status" value="1"/>
</dbReference>
<evidence type="ECO:0000255" key="1">
    <source>
        <dbReference type="HAMAP-Rule" id="MF_00023"/>
    </source>
</evidence>
<evidence type="ECO:0000256" key="2">
    <source>
        <dbReference type="SAM" id="MobiDB-lite"/>
    </source>
</evidence>
<gene>
    <name evidence="1" type="primary">smpB</name>
    <name type="ordered locus">FTT_1186</name>
</gene>